<sequence length="245" mass="28363">MKMKQISDTTLKITISLEDLMDRGMEIADFLVPQEKTEEFFYAILDELEMPDSFLDTGMLSFRVTPKPDKVDVFVTKSKIDQNLDFEDLSDLPDMEELAQMSPDEFIKTLEKSIADKTKDDIEAIQSLEQVEAKEEEQEQAEQEAESKKEPYIYYILSFAKLADLVAFAKTVTFEMETSELYKMNERYYLTILVDIENHPSPYPAWLLARMREFADDSDISRSVLQEYGQVLMSHDAVLNLQKIG</sequence>
<comment type="function">
    <text evidence="1">Enables the recognition and targeting of unfolded and aggregated proteins to the ClpC protease or to other proteins involved in proteolysis.</text>
</comment>
<comment type="subunit">
    <text evidence="1">Homodimer.</text>
</comment>
<comment type="domain">
    <text>The N-terminal domain probably binds unfolded/aggregated proteins; the C-terminal domain interacts with ClpC.</text>
</comment>
<comment type="similarity">
    <text evidence="1">Belongs to the MecA family.</text>
</comment>
<accession>Q04JY5</accession>
<organism>
    <name type="scientific">Streptococcus pneumoniae serotype 2 (strain D39 / NCTC 7466)</name>
    <dbReference type="NCBI Taxonomy" id="373153"/>
    <lineage>
        <taxon>Bacteria</taxon>
        <taxon>Bacillati</taxon>
        <taxon>Bacillota</taxon>
        <taxon>Bacilli</taxon>
        <taxon>Lactobacillales</taxon>
        <taxon>Streptococcaceae</taxon>
        <taxon>Streptococcus</taxon>
    </lineage>
</organism>
<feature type="chain" id="PRO_1000065350" description="Adapter protein MecA">
    <location>
        <begin position="1"/>
        <end position="245"/>
    </location>
</feature>
<evidence type="ECO:0000255" key="1">
    <source>
        <dbReference type="HAMAP-Rule" id="MF_01124"/>
    </source>
</evidence>
<reference key="1">
    <citation type="journal article" date="2007" name="J. Bacteriol.">
        <title>Genome sequence of Avery's virulent serotype 2 strain D39 of Streptococcus pneumoniae and comparison with that of unencapsulated laboratory strain R6.</title>
        <authorList>
            <person name="Lanie J.A."/>
            <person name="Ng W.-L."/>
            <person name="Kazmierczak K.M."/>
            <person name="Andrzejewski T.M."/>
            <person name="Davidsen T.M."/>
            <person name="Wayne K.J."/>
            <person name="Tettelin H."/>
            <person name="Glass J.I."/>
            <person name="Winkler M.E."/>
        </authorList>
    </citation>
    <scope>NUCLEOTIDE SEQUENCE [LARGE SCALE GENOMIC DNA]</scope>
    <source>
        <strain>D39 / NCTC 7466</strain>
    </source>
</reference>
<dbReference type="EMBL" id="CP000410">
    <property type="protein sequence ID" value="ABJ53985.1"/>
    <property type="molecule type" value="Genomic_DNA"/>
</dbReference>
<dbReference type="RefSeq" id="WP_000782664.1">
    <property type="nucleotide sequence ID" value="NZ_JAMLJR010000005.1"/>
</dbReference>
<dbReference type="SMR" id="Q04JY5"/>
<dbReference type="PaxDb" id="373153-SPD_1196"/>
<dbReference type="KEGG" id="spd:SPD_1196"/>
<dbReference type="eggNOG" id="COG4862">
    <property type="taxonomic scope" value="Bacteria"/>
</dbReference>
<dbReference type="HOGENOM" id="CLU_071496_1_0_9"/>
<dbReference type="BioCyc" id="SPNE373153:G1G6V-1293-MONOMER"/>
<dbReference type="Proteomes" id="UP000001452">
    <property type="component" value="Chromosome"/>
</dbReference>
<dbReference type="GO" id="GO:0030674">
    <property type="term" value="F:protein-macromolecule adaptor activity"/>
    <property type="evidence" value="ECO:0007669"/>
    <property type="project" value="UniProtKB-UniRule"/>
</dbReference>
<dbReference type="Gene3D" id="3.30.70.1950">
    <property type="match status" value="1"/>
</dbReference>
<dbReference type="HAMAP" id="MF_01124">
    <property type="entry name" value="MecA"/>
    <property type="match status" value="1"/>
</dbReference>
<dbReference type="InterPro" id="IPR038471">
    <property type="entry name" value="MecA_C_sf"/>
</dbReference>
<dbReference type="InterPro" id="IPR008681">
    <property type="entry name" value="Neg-reg_MecA"/>
</dbReference>
<dbReference type="NCBIfam" id="NF002643">
    <property type="entry name" value="PRK02315.1-4"/>
    <property type="match status" value="1"/>
</dbReference>
<dbReference type="PANTHER" id="PTHR39161">
    <property type="entry name" value="ADAPTER PROTEIN MECA"/>
    <property type="match status" value="1"/>
</dbReference>
<dbReference type="PANTHER" id="PTHR39161:SF1">
    <property type="entry name" value="ADAPTER PROTEIN MECA 1"/>
    <property type="match status" value="1"/>
</dbReference>
<dbReference type="Pfam" id="PF05389">
    <property type="entry name" value="MecA"/>
    <property type="match status" value="1"/>
</dbReference>
<dbReference type="PIRSF" id="PIRSF029008">
    <property type="entry name" value="MecA"/>
    <property type="match status" value="1"/>
</dbReference>
<name>MECA_STRP2</name>
<proteinExistence type="inferred from homology"/>
<keyword id="KW-1185">Reference proteome</keyword>
<gene>
    <name evidence="1" type="primary">mecA</name>
    <name type="ordered locus">SPD_1196</name>
</gene>
<protein>
    <recommendedName>
        <fullName evidence="1">Adapter protein MecA</fullName>
    </recommendedName>
</protein>